<reference key="1">
    <citation type="journal article" date="2005" name="Nucleic Acids Res.">
        <title>Genome dynamics and diversity of Shigella species, the etiologic agents of bacillary dysentery.</title>
        <authorList>
            <person name="Yang F."/>
            <person name="Yang J."/>
            <person name="Zhang X."/>
            <person name="Chen L."/>
            <person name="Jiang Y."/>
            <person name="Yan Y."/>
            <person name="Tang X."/>
            <person name="Wang J."/>
            <person name="Xiong Z."/>
            <person name="Dong J."/>
            <person name="Xue Y."/>
            <person name="Zhu Y."/>
            <person name="Xu X."/>
            <person name="Sun L."/>
            <person name="Chen S."/>
            <person name="Nie H."/>
            <person name="Peng J."/>
            <person name="Xu J."/>
            <person name="Wang Y."/>
            <person name="Yuan Z."/>
            <person name="Wen Y."/>
            <person name="Yao Z."/>
            <person name="Shen Y."/>
            <person name="Qiang B."/>
            <person name="Hou Y."/>
            <person name="Yu J."/>
            <person name="Jin Q."/>
        </authorList>
    </citation>
    <scope>NUCLEOTIDE SEQUENCE [LARGE SCALE GENOMIC DNA]</scope>
    <source>
        <strain>Sb227</strain>
    </source>
</reference>
<protein>
    <recommendedName>
        <fullName evidence="1">Glutaminase</fullName>
        <ecNumber evidence="1">3.5.1.2</ecNumber>
    </recommendedName>
</protein>
<proteinExistence type="inferred from homology"/>
<gene>
    <name evidence="1" type="primary">glsA</name>
    <name type="ordered locus">SBO_0387</name>
</gene>
<keyword id="KW-0378">Hydrolase</keyword>
<feature type="chain" id="PRO_1000048364" description="Glutaminase">
    <location>
        <begin position="1"/>
        <end position="310"/>
    </location>
</feature>
<feature type="binding site" evidence="1">
    <location>
        <position position="66"/>
    </location>
    <ligand>
        <name>substrate</name>
    </ligand>
</feature>
<feature type="binding site" evidence="1">
    <location>
        <position position="117"/>
    </location>
    <ligand>
        <name>substrate</name>
    </ligand>
</feature>
<feature type="binding site" evidence="1">
    <location>
        <position position="161"/>
    </location>
    <ligand>
        <name>substrate</name>
    </ligand>
</feature>
<feature type="binding site" evidence="1">
    <location>
        <position position="168"/>
    </location>
    <ligand>
        <name>substrate</name>
    </ligand>
</feature>
<feature type="binding site" evidence="1">
    <location>
        <position position="192"/>
    </location>
    <ligand>
        <name>substrate</name>
    </ligand>
</feature>
<feature type="binding site" evidence="1">
    <location>
        <position position="244"/>
    </location>
    <ligand>
        <name>substrate</name>
    </ligand>
</feature>
<feature type="binding site" evidence="1">
    <location>
        <position position="262"/>
    </location>
    <ligand>
        <name>substrate</name>
    </ligand>
</feature>
<dbReference type="EC" id="3.5.1.2" evidence="1"/>
<dbReference type="EMBL" id="CP000036">
    <property type="protein sequence ID" value="ABB65098.1"/>
    <property type="molecule type" value="Genomic_DNA"/>
</dbReference>
<dbReference type="RefSeq" id="WP_000883045.1">
    <property type="nucleotide sequence ID" value="NC_007613.1"/>
</dbReference>
<dbReference type="SMR" id="Q325B0"/>
<dbReference type="KEGG" id="sbo:SBO_0387"/>
<dbReference type="HOGENOM" id="CLU_027932_1_0_6"/>
<dbReference type="Proteomes" id="UP000007067">
    <property type="component" value="Chromosome"/>
</dbReference>
<dbReference type="GO" id="GO:0004359">
    <property type="term" value="F:glutaminase activity"/>
    <property type="evidence" value="ECO:0007669"/>
    <property type="project" value="UniProtKB-UniRule"/>
</dbReference>
<dbReference type="GO" id="GO:0006537">
    <property type="term" value="P:glutamate biosynthetic process"/>
    <property type="evidence" value="ECO:0007669"/>
    <property type="project" value="TreeGrafter"/>
</dbReference>
<dbReference type="GO" id="GO:0006543">
    <property type="term" value="P:glutamine catabolic process"/>
    <property type="evidence" value="ECO:0007669"/>
    <property type="project" value="TreeGrafter"/>
</dbReference>
<dbReference type="FunFam" id="3.40.710.10:FF:000014">
    <property type="entry name" value="Glutaminase"/>
    <property type="match status" value="1"/>
</dbReference>
<dbReference type="Gene3D" id="3.40.710.10">
    <property type="entry name" value="DD-peptidase/beta-lactamase superfamily"/>
    <property type="match status" value="1"/>
</dbReference>
<dbReference type="HAMAP" id="MF_00313">
    <property type="entry name" value="Glutaminase"/>
    <property type="match status" value="1"/>
</dbReference>
<dbReference type="InterPro" id="IPR012338">
    <property type="entry name" value="Beta-lactam/transpept-like"/>
</dbReference>
<dbReference type="InterPro" id="IPR015868">
    <property type="entry name" value="Glutaminase"/>
</dbReference>
<dbReference type="NCBIfam" id="TIGR03814">
    <property type="entry name" value="Gln_ase"/>
    <property type="match status" value="1"/>
</dbReference>
<dbReference type="NCBIfam" id="NF009020">
    <property type="entry name" value="PRK12356.1"/>
    <property type="match status" value="1"/>
</dbReference>
<dbReference type="PANTHER" id="PTHR12544">
    <property type="entry name" value="GLUTAMINASE"/>
    <property type="match status" value="1"/>
</dbReference>
<dbReference type="PANTHER" id="PTHR12544:SF48">
    <property type="entry name" value="GLUTAMINASE 1"/>
    <property type="match status" value="1"/>
</dbReference>
<dbReference type="Pfam" id="PF04960">
    <property type="entry name" value="Glutaminase"/>
    <property type="match status" value="1"/>
</dbReference>
<dbReference type="SUPFAM" id="SSF56601">
    <property type="entry name" value="beta-lactamase/transpeptidase-like"/>
    <property type="match status" value="1"/>
</dbReference>
<name>GLSA_SHIBS</name>
<accession>Q325B0</accession>
<sequence length="310" mass="32959">MLDANKLQQAVDQAYTQFHSLNGGQNADYIPFLANVPGQLAVVAIVTCDGNVYSAGDSDYRFALESISKVCTLALALEDVGPQAVQDKIGADPTGLPFNSVIALELHGGKPLSPLVNAGAIATTSLINAENIEQRWQRILHIQQQLAGEQVALSDEVNQSEQTTNFHNRAIAWLLYSAGYLYCDAMEACDVYTRQCSTLINTVELATLGATLAAGGLNPLTHKRVLQADNVPYILAEMMMEGLYGRSGDWAYRVGLPGKSGVGGGILAVVPGVMGIAAFSPPLDEEGNSVRGQKMVASVAKQLGYNVFKG</sequence>
<comment type="catalytic activity">
    <reaction evidence="1">
        <text>L-glutamine + H2O = L-glutamate + NH4(+)</text>
        <dbReference type="Rhea" id="RHEA:15889"/>
        <dbReference type="ChEBI" id="CHEBI:15377"/>
        <dbReference type="ChEBI" id="CHEBI:28938"/>
        <dbReference type="ChEBI" id="CHEBI:29985"/>
        <dbReference type="ChEBI" id="CHEBI:58359"/>
        <dbReference type="EC" id="3.5.1.2"/>
    </reaction>
</comment>
<comment type="subunit">
    <text evidence="1">Homotetramer.</text>
</comment>
<comment type="similarity">
    <text evidence="1">Belongs to the glutaminase family.</text>
</comment>
<organism>
    <name type="scientific">Shigella boydii serotype 4 (strain Sb227)</name>
    <dbReference type="NCBI Taxonomy" id="300268"/>
    <lineage>
        <taxon>Bacteria</taxon>
        <taxon>Pseudomonadati</taxon>
        <taxon>Pseudomonadota</taxon>
        <taxon>Gammaproteobacteria</taxon>
        <taxon>Enterobacterales</taxon>
        <taxon>Enterobacteriaceae</taxon>
        <taxon>Shigella</taxon>
    </lineage>
</organism>
<evidence type="ECO:0000255" key="1">
    <source>
        <dbReference type="HAMAP-Rule" id="MF_00313"/>
    </source>
</evidence>